<evidence type="ECO:0000250" key="1"/>
<evidence type="ECO:0000305" key="2"/>
<protein>
    <recommendedName>
        <fullName>Protein HRI1</fullName>
    </recommendedName>
</protein>
<gene>
    <name type="primary">HRI1</name>
    <name type="ordered locus">ZYRO0D15048g</name>
</gene>
<name>HRI1_ZYGRC</name>
<reference key="1">
    <citation type="journal article" date="2009" name="Genome Res.">
        <title>Comparative genomics of protoploid Saccharomycetaceae.</title>
        <authorList>
            <consortium name="The Genolevures Consortium"/>
            <person name="Souciet J.-L."/>
            <person name="Dujon B."/>
            <person name="Gaillardin C."/>
            <person name="Johnston M."/>
            <person name="Baret P.V."/>
            <person name="Cliften P."/>
            <person name="Sherman D.J."/>
            <person name="Weissenbach J."/>
            <person name="Westhof E."/>
            <person name="Wincker P."/>
            <person name="Jubin C."/>
            <person name="Poulain J."/>
            <person name="Barbe V."/>
            <person name="Segurens B."/>
            <person name="Artiguenave F."/>
            <person name="Anthouard V."/>
            <person name="Vacherie B."/>
            <person name="Val M.-E."/>
            <person name="Fulton R.S."/>
            <person name="Minx P."/>
            <person name="Wilson R."/>
            <person name="Durrens P."/>
            <person name="Jean G."/>
            <person name="Marck C."/>
            <person name="Martin T."/>
            <person name="Nikolski M."/>
            <person name="Rolland T."/>
            <person name="Seret M.-L."/>
            <person name="Casaregola S."/>
            <person name="Despons L."/>
            <person name="Fairhead C."/>
            <person name="Fischer G."/>
            <person name="Lafontaine I."/>
            <person name="Leh V."/>
            <person name="Lemaire M."/>
            <person name="de Montigny J."/>
            <person name="Neuveglise C."/>
            <person name="Thierry A."/>
            <person name="Blanc-Lenfle I."/>
            <person name="Bleykasten C."/>
            <person name="Diffels J."/>
            <person name="Fritsch E."/>
            <person name="Frangeul L."/>
            <person name="Goeffon A."/>
            <person name="Jauniaux N."/>
            <person name="Kachouri-Lafond R."/>
            <person name="Payen C."/>
            <person name="Potier S."/>
            <person name="Pribylova L."/>
            <person name="Ozanne C."/>
            <person name="Richard G.-F."/>
            <person name="Sacerdot C."/>
            <person name="Straub M.-L."/>
            <person name="Talla E."/>
        </authorList>
    </citation>
    <scope>NUCLEOTIDE SEQUENCE [LARGE SCALE GENOMIC DNA]</scope>
    <source>
        <strain>ATCC 2623 / CBS 732 / BCRC 21506 / NBRC 1130 / NCYC 568 / NRRL Y-229</strain>
    </source>
</reference>
<proteinExistence type="inferred from homology"/>
<organism>
    <name type="scientific">Zygosaccharomyces rouxii (strain ATCC 2623 / CBS 732 / NBRC 1130 / NCYC 568 / NRRL Y-229)</name>
    <dbReference type="NCBI Taxonomy" id="559307"/>
    <lineage>
        <taxon>Eukaryota</taxon>
        <taxon>Fungi</taxon>
        <taxon>Dikarya</taxon>
        <taxon>Ascomycota</taxon>
        <taxon>Saccharomycotina</taxon>
        <taxon>Saccharomycetes</taxon>
        <taxon>Saccharomycetales</taxon>
        <taxon>Saccharomycetaceae</taxon>
        <taxon>Zygosaccharomyces</taxon>
    </lineage>
</organism>
<sequence length="246" mass="27507">MPQLLKRLAFQVGSVPNERTTTFTSISNDGHHISLRPLVNLNSTSEEEFPFEWVFAGLNTGVRVVPISEGVVEQDFNFWLDTNCYLNLPNTHRGEVKTIWTQWDSGSVAENGEVFPNGPDNPGVPFFELWHPLDPNRVEQVLLNDPLTTAEATKARSIVFKVREGQGYDGLVIVTGRWAQGFLSKQGDATVDGLNFLRTIELEDGSREALVLYGSDAEKFPQEYLGYESGAHVEVHGLKWDVIESN</sequence>
<comment type="subcellular location">
    <subcellularLocation>
        <location evidence="1">Cytoplasm</location>
    </subcellularLocation>
    <subcellularLocation>
        <location evidence="1">Nucleus</location>
    </subcellularLocation>
</comment>
<comment type="similarity">
    <text evidence="2">Belongs to the HRI1 family.</text>
</comment>
<keyword id="KW-0963">Cytoplasm</keyword>
<keyword id="KW-0539">Nucleus</keyword>
<keyword id="KW-1185">Reference proteome</keyword>
<accession>C5DWI2</accession>
<dbReference type="EMBL" id="CU928176">
    <property type="protein sequence ID" value="CAR28151.1"/>
    <property type="molecule type" value="Genomic_DNA"/>
</dbReference>
<dbReference type="RefSeq" id="XP_002497084.1">
    <property type="nucleotide sequence ID" value="XM_002497039.1"/>
</dbReference>
<dbReference type="SMR" id="C5DWI2"/>
<dbReference type="FunCoup" id="C5DWI2">
    <property type="interactions" value="33"/>
</dbReference>
<dbReference type="STRING" id="559307.C5DWI2"/>
<dbReference type="GeneID" id="8204350"/>
<dbReference type="KEGG" id="zro:ZYRO0D15048g"/>
<dbReference type="HOGENOM" id="CLU_097607_0_0_1"/>
<dbReference type="InParanoid" id="C5DWI2"/>
<dbReference type="Proteomes" id="UP000008536">
    <property type="component" value="Chromosome D"/>
</dbReference>
<dbReference type="GO" id="GO:0005737">
    <property type="term" value="C:cytoplasm"/>
    <property type="evidence" value="ECO:0007669"/>
    <property type="project" value="UniProtKB-SubCell"/>
</dbReference>
<dbReference type="GO" id="GO:0005634">
    <property type="term" value="C:nucleus"/>
    <property type="evidence" value="ECO:0007669"/>
    <property type="project" value="UniProtKB-SubCell"/>
</dbReference>
<dbReference type="CDD" id="cd11693">
    <property type="entry name" value="HRI1_C_like"/>
    <property type="match status" value="1"/>
</dbReference>
<dbReference type="CDD" id="cd11692">
    <property type="entry name" value="HRI1_N_like"/>
    <property type="match status" value="1"/>
</dbReference>
<dbReference type="Gene3D" id="2.40.128.310">
    <property type="entry name" value="Protein HRI1, C-terminal domain"/>
    <property type="match status" value="1"/>
</dbReference>
<dbReference type="Gene3D" id="2.40.128.320">
    <property type="entry name" value="Protein HRI1, N-terminal domain"/>
    <property type="match status" value="1"/>
</dbReference>
<dbReference type="InterPro" id="IPR031818">
    <property type="entry name" value="Hri1"/>
</dbReference>
<dbReference type="InterPro" id="IPR038744">
    <property type="entry name" value="Hri1_N"/>
</dbReference>
<dbReference type="InterPro" id="IPR043047">
    <property type="entry name" value="Hri1_N_sf"/>
</dbReference>
<dbReference type="Pfam" id="PF16815">
    <property type="entry name" value="HRI1"/>
    <property type="match status" value="1"/>
</dbReference>
<feature type="chain" id="PRO_0000410823" description="Protein HRI1">
    <location>
        <begin position="1"/>
        <end position="246"/>
    </location>
</feature>